<gene>
    <name evidence="3" type="primary">esxG</name>
    <name evidence="5" type="ordered locus">MSMEG_0620</name>
    <name evidence="6" type="ordered locus">MSMEI_0604</name>
</gene>
<reference key="1">
    <citation type="submission" date="2006-10" db="EMBL/GenBank/DDBJ databases">
        <authorList>
            <person name="Fleischmann R.D."/>
            <person name="Dodson R.J."/>
            <person name="Haft D.H."/>
            <person name="Merkel J.S."/>
            <person name="Nelson W.C."/>
            <person name="Fraser C.M."/>
        </authorList>
    </citation>
    <scope>NUCLEOTIDE SEQUENCE [LARGE SCALE GENOMIC DNA]</scope>
    <source>
        <strain>ATCC 700084 / mc(2)155</strain>
    </source>
</reference>
<reference key="2">
    <citation type="journal article" date="2007" name="Genome Biol.">
        <title>Interrupted coding sequences in Mycobacterium smegmatis: authentic mutations or sequencing errors?</title>
        <authorList>
            <person name="Deshayes C."/>
            <person name="Perrodou E."/>
            <person name="Gallien S."/>
            <person name="Euphrasie D."/>
            <person name="Schaeffer C."/>
            <person name="Van-Dorsselaer A."/>
            <person name="Poch O."/>
            <person name="Lecompte O."/>
            <person name="Reyrat J.-M."/>
        </authorList>
    </citation>
    <scope>NUCLEOTIDE SEQUENCE [LARGE SCALE GENOMIC DNA]</scope>
    <source>
        <strain>ATCC 700084 / mc(2)155</strain>
    </source>
</reference>
<reference key="3">
    <citation type="journal article" date="2009" name="Genome Res.">
        <title>Ortho-proteogenomics: multiple proteomes investigation through orthology and a new MS-based protocol.</title>
        <authorList>
            <person name="Gallien S."/>
            <person name="Perrodou E."/>
            <person name="Carapito C."/>
            <person name="Deshayes C."/>
            <person name="Reyrat J.-M."/>
            <person name="Van Dorsselaer A."/>
            <person name="Poch O."/>
            <person name="Schaeffer C."/>
            <person name="Lecompte O."/>
        </authorList>
    </citation>
    <scope>NUCLEOTIDE SEQUENCE [LARGE SCALE GENOMIC DNA]</scope>
    <source>
        <strain>ATCC 700084 / mc(2)155</strain>
    </source>
</reference>
<reference key="4">
    <citation type="journal article" date="2014" name="MBio">
        <title>Mycobacterial Esx-3 requires multiple components for iron acquisition.</title>
        <authorList>
            <person name="Siegrist M.S."/>
            <person name="Steigedal M."/>
            <person name="Ahmad R."/>
            <person name="Mehra A."/>
            <person name="Dragset M.S."/>
            <person name="Schuster B.M."/>
            <person name="Philips J.A."/>
            <person name="Carr S.A."/>
            <person name="Rubin E.J."/>
        </authorList>
    </citation>
    <scope>SUBCELLULAR LOCATION</scope>
</reference>
<reference evidence="7" key="5">
    <citation type="journal article" date="2013" name="PLoS ONE">
        <title>Heterologous expression of mycobacterial Esx complexes in Escherichia coli for structural studies is facilitated by the use of maltose binding protein fusions.</title>
        <authorList>
            <person name="Arbing M.A."/>
            <person name="Chan S."/>
            <person name="Harris L."/>
            <person name="Kuo E."/>
            <person name="Zhou T.T."/>
            <person name="Ahn C.J."/>
            <person name="Nguyen L."/>
            <person name="He Q."/>
            <person name="Lu J."/>
            <person name="Menchavez P.T."/>
            <person name="Shin A."/>
            <person name="Holton T."/>
            <person name="Sawaya M.R."/>
            <person name="Cascio D."/>
            <person name="Eisenberg D."/>
        </authorList>
    </citation>
    <scope>X-RAY CRYSTALLOGRAPHY (2.70 ANGSTROMS) IN COMPLEX WITH ESXH</scope>
</reference>
<dbReference type="EMBL" id="CP000480">
    <property type="protein sequence ID" value="ABK71673.1"/>
    <property type="molecule type" value="Genomic_DNA"/>
</dbReference>
<dbReference type="EMBL" id="CP001663">
    <property type="protein sequence ID" value="AFP37085.1"/>
    <property type="molecule type" value="Genomic_DNA"/>
</dbReference>
<dbReference type="RefSeq" id="WP_011727071.1">
    <property type="nucleotide sequence ID" value="NZ_SIJM01000009.1"/>
</dbReference>
<dbReference type="RefSeq" id="YP_885031.1">
    <property type="nucleotide sequence ID" value="NC_008596.1"/>
</dbReference>
<dbReference type="PDB" id="3Q4H">
    <property type="method" value="X-ray"/>
    <property type="resolution" value="2.70 A"/>
    <property type="chains" value="A/C=1-97"/>
</dbReference>
<dbReference type="PDBsum" id="3Q4H"/>
<dbReference type="SMR" id="A0QQ43"/>
<dbReference type="STRING" id="246196.MSMEG_0620"/>
<dbReference type="PaxDb" id="246196-MSMEI_0604"/>
<dbReference type="GeneID" id="93455533"/>
<dbReference type="KEGG" id="msb:LJ00_03080"/>
<dbReference type="KEGG" id="msg:MSMEI_0604"/>
<dbReference type="KEGG" id="msm:MSMEG_0620"/>
<dbReference type="PATRIC" id="fig|246196.19.peg.616"/>
<dbReference type="eggNOG" id="ENOG5030NJS">
    <property type="taxonomic scope" value="Bacteria"/>
</dbReference>
<dbReference type="EvolutionaryTrace" id="A0QQ43"/>
<dbReference type="Proteomes" id="UP000000757">
    <property type="component" value="Chromosome"/>
</dbReference>
<dbReference type="Proteomes" id="UP000006158">
    <property type="component" value="Chromosome"/>
</dbReference>
<dbReference type="GO" id="GO:0005576">
    <property type="term" value="C:extracellular region"/>
    <property type="evidence" value="ECO:0007669"/>
    <property type="project" value="UniProtKB-SubCell"/>
</dbReference>
<dbReference type="Gene3D" id="1.10.287.1060">
    <property type="entry name" value="ESAT-6-like"/>
    <property type="match status" value="1"/>
</dbReference>
<dbReference type="InterPro" id="IPR036689">
    <property type="entry name" value="ESAT-6-like_sf"/>
</dbReference>
<dbReference type="SUPFAM" id="SSF140453">
    <property type="entry name" value="EsxAB dimer-like"/>
    <property type="match status" value="1"/>
</dbReference>
<feature type="chain" id="PRO_0000434998" description="ESAT-6-like protein EsxG">
    <location>
        <begin position="1"/>
        <end position="97"/>
    </location>
</feature>
<feature type="helix" evidence="8">
    <location>
        <begin position="7"/>
        <end position="37"/>
    </location>
</feature>
<feature type="turn" evidence="8">
    <location>
        <begin position="38"/>
        <end position="42"/>
    </location>
</feature>
<feature type="helix" evidence="8">
    <location>
        <begin position="46"/>
        <end position="76"/>
    </location>
</feature>
<feature type="helix" evidence="8">
    <location>
        <begin position="78"/>
        <end position="93"/>
    </location>
</feature>
<comment type="subunit">
    <text evidence="1">Forms a tight 1:1 complex with EsxH.</text>
</comment>
<comment type="subcellular location">
    <subcellularLocation>
        <location evidence="2">Secreted</location>
    </subcellularLocation>
    <text evidence="2">Secreted via the ESX-3 / type VII secretion system (T7SS).</text>
</comment>
<comment type="similarity">
    <text evidence="4">Belongs to the WXG100 family. CFP-10 subfamily.</text>
</comment>
<name>ESXG_MYCS2</name>
<sequence>MSLLDAHIPQLIASEANFGAKAALMRSTIAQAEQAAMSSQAFHMGEASAAFQAAHARFVEVSAKVNALLDIAQLNIGDAASSYVAQDAAAASTYTGI</sequence>
<protein>
    <recommendedName>
        <fullName evidence="4">ESAT-6-like protein EsxG</fullName>
    </recommendedName>
</protein>
<organism>
    <name type="scientific">Mycolicibacterium smegmatis (strain ATCC 700084 / mc(2)155)</name>
    <name type="common">Mycobacterium smegmatis</name>
    <dbReference type="NCBI Taxonomy" id="246196"/>
    <lineage>
        <taxon>Bacteria</taxon>
        <taxon>Bacillati</taxon>
        <taxon>Actinomycetota</taxon>
        <taxon>Actinomycetes</taxon>
        <taxon>Mycobacteriales</taxon>
        <taxon>Mycobacteriaceae</taxon>
        <taxon>Mycolicibacterium</taxon>
    </lineage>
</organism>
<proteinExistence type="evidence at protein level"/>
<evidence type="ECO:0000269" key="1">
    <source>
    </source>
</evidence>
<evidence type="ECO:0000269" key="2">
    <source>
    </source>
</evidence>
<evidence type="ECO:0000303" key="3">
    <source>
    </source>
</evidence>
<evidence type="ECO:0000305" key="4"/>
<evidence type="ECO:0000312" key="5">
    <source>
        <dbReference type="EMBL" id="ABK71673.1"/>
    </source>
</evidence>
<evidence type="ECO:0000312" key="6">
    <source>
        <dbReference type="EMBL" id="AFP37085.1"/>
    </source>
</evidence>
<evidence type="ECO:0007744" key="7">
    <source>
        <dbReference type="PDB" id="3Q4H"/>
    </source>
</evidence>
<evidence type="ECO:0007829" key="8">
    <source>
        <dbReference type="PDB" id="3Q4H"/>
    </source>
</evidence>
<keyword id="KW-0002">3D-structure</keyword>
<keyword id="KW-1185">Reference proteome</keyword>
<keyword id="KW-0964">Secreted</keyword>
<accession>A0QQ43</accession>